<feature type="chain" id="PRO_1000073016" description="Pyridinium-3,5-bisthiocarboxylic acid mononucleotide nickel insertion protein">
    <location>
        <begin position="1"/>
        <end position="402"/>
    </location>
</feature>
<reference key="1">
    <citation type="journal article" date="2006" name="J. Bacteriol.">
        <title>Complete genome sequence of the dehalorespiring bacterium Desulfitobacterium hafniense Y51 and comparison with Dehalococcoides ethenogenes 195.</title>
        <authorList>
            <person name="Nonaka H."/>
            <person name="Keresztes G."/>
            <person name="Shinoda Y."/>
            <person name="Ikenaga Y."/>
            <person name="Abe M."/>
            <person name="Naito K."/>
            <person name="Inatomi K."/>
            <person name="Furukawa K."/>
            <person name="Inui M."/>
            <person name="Yukawa H."/>
        </authorList>
    </citation>
    <scope>NUCLEOTIDE SEQUENCE [LARGE SCALE GENOMIC DNA]</scope>
    <source>
        <strain>Y51</strain>
    </source>
</reference>
<name>LARC_DESHY</name>
<protein>
    <recommendedName>
        <fullName evidence="1">Pyridinium-3,5-bisthiocarboxylic acid mononucleotide nickel insertion protein</fullName>
        <shortName evidence="1">P2TMN nickel insertion protein</shortName>
        <ecNumber evidence="1">4.99.1.12</ecNumber>
    </recommendedName>
    <alternativeName>
        <fullName evidence="1">Nickel-pincer cofactor biosynthesis protein LarC</fullName>
    </alternativeName>
</protein>
<organism>
    <name type="scientific">Desulfitobacterium hafniense (strain Y51)</name>
    <dbReference type="NCBI Taxonomy" id="138119"/>
    <lineage>
        <taxon>Bacteria</taxon>
        <taxon>Bacillati</taxon>
        <taxon>Bacillota</taxon>
        <taxon>Clostridia</taxon>
        <taxon>Eubacteriales</taxon>
        <taxon>Desulfitobacteriaceae</taxon>
        <taxon>Desulfitobacterium</taxon>
    </lineage>
</organism>
<gene>
    <name evidence="1" type="primary">larC</name>
    <name type="ordered locus">DSY2209</name>
</gene>
<dbReference type="EC" id="4.99.1.12" evidence="1"/>
<dbReference type="EMBL" id="AP008230">
    <property type="protein sequence ID" value="BAE83998.1"/>
    <property type="molecule type" value="Genomic_DNA"/>
</dbReference>
<dbReference type="RefSeq" id="WP_011460167.1">
    <property type="nucleotide sequence ID" value="NC_007907.1"/>
</dbReference>
<dbReference type="SMR" id="Q24VE4"/>
<dbReference type="STRING" id="138119.DSY2209"/>
<dbReference type="KEGG" id="dsy:DSY2209"/>
<dbReference type="eggNOG" id="COG1641">
    <property type="taxonomic scope" value="Bacteria"/>
</dbReference>
<dbReference type="HOGENOM" id="CLU_028523_2_1_9"/>
<dbReference type="Proteomes" id="UP000001946">
    <property type="component" value="Chromosome"/>
</dbReference>
<dbReference type="GO" id="GO:0016829">
    <property type="term" value="F:lyase activity"/>
    <property type="evidence" value="ECO:0007669"/>
    <property type="project" value="UniProtKB-UniRule"/>
</dbReference>
<dbReference type="GO" id="GO:0016151">
    <property type="term" value="F:nickel cation binding"/>
    <property type="evidence" value="ECO:0007669"/>
    <property type="project" value="UniProtKB-UniRule"/>
</dbReference>
<dbReference type="GO" id="GO:0051604">
    <property type="term" value="P:protein maturation"/>
    <property type="evidence" value="ECO:0007669"/>
    <property type="project" value="UniProtKB-UniRule"/>
</dbReference>
<dbReference type="Gene3D" id="3.10.20.300">
    <property type="entry name" value="mk0293 like domain"/>
    <property type="match status" value="1"/>
</dbReference>
<dbReference type="Gene3D" id="3.30.70.1380">
    <property type="entry name" value="Transcriptional regulatory protein pf0864 domain like"/>
    <property type="match status" value="1"/>
</dbReference>
<dbReference type="HAMAP" id="MF_01074">
    <property type="entry name" value="LarC"/>
    <property type="match status" value="1"/>
</dbReference>
<dbReference type="InterPro" id="IPR002822">
    <property type="entry name" value="Ni_insertion"/>
</dbReference>
<dbReference type="NCBIfam" id="TIGR00299">
    <property type="entry name" value="nickel pincer cofactor biosynthesis protein LarC"/>
    <property type="match status" value="1"/>
</dbReference>
<dbReference type="PANTHER" id="PTHR36566">
    <property type="entry name" value="NICKEL INSERTION PROTEIN-RELATED"/>
    <property type="match status" value="1"/>
</dbReference>
<dbReference type="PANTHER" id="PTHR36566:SF1">
    <property type="entry name" value="PYRIDINIUM-3,5-BISTHIOCARBOXYLIC ACID MONONUCLEOTIDE NICKEL INSERTION PROTEIN"/>
    <property type="match status" value="1"/>
</dbReference>
<dbReference type="Pfam" id="PF01969">
    <property type="entry name" value="Ni_insertion"/>
    <property type="match status" value="1"/>
</dbReference>
<keyword id="KW-0456">Lyase</keyword>
<keyword id="KW-0533">Nickel</keyword>
<keyword id="KW-1185">Reference proteome</keyword>
<sequence length="402" mass="44769">MKAAYLDCFSGISGDMLLGALVDAGLDFNLLQRDLAGLDLDEYELYEQKVLKQGIRGTQIHVHALEGHVHRHLSDIQAIIGRSALPPQVKEKSLEIFTRLGKAEAKIHGTDIEQIHFHEVGAVDAIVDIVGAVIGFWRLGIEKVFASPIHVGKGFVKAAHGLLPVPAPATLELLTGVPIYAQDVEGELATPPGAAIVTAYCREFGPFPKIRVERVGYGAGVKDLTIPNLLRLTVGELADEDKGQEGIREGEALTLEVNIDDMNPECYDYLFEKLFQAGAMDVYIQTIQMKKNRPAVLLTVQTPYHKLEEMRRILFQETTTIGLRVYPIKKYMLPYELLTVETNYGSAKVKVAFMEGRACTVSPEYEDCRRLARLTGEPLKQIYEEIKEKAKILLYSTKYPMD</sequence>
<proteinExistence type="inferred from homology"/>
<evidence type="ECO:0000255" key="1">
    <source>
        <dbReference type="HAMAP-Rule" id="MF_01074"/>
    </source>
</evidence>
<accession>Q24VE4</accession>
<comment type="function">
    <text evidence="1">Involved in the biosynthesis of a nickel-pincer cofactor ((SCS)Ni(II) pincer complex). Binds Ni(2+), and functions in nickel delivery to pyridinium-3,5-bisthiocarboxylic acid mononucleotide (P2TMN), to form the mature cofactor. Is thus probably required for the activation of nickel-pincer cofactor-dependent enzymes.</text>
</comment>
<comment type="catalytic activity">
    <reaction evidence="1">
        <text>Ni(II)-pyridinium-3,5-bisthiocarboxylate mononucleotide = pyridinium-3,5-bisthiocarboxylate mononucleotide + Ni(2+)</text>
        <dbReference type="Rhea" id="RHEA:54784"/>
        <dbReference type="ChEBI" id="CHEBI:49786"/>
        <dbReference type="ChEBI" id="CHEBI:137372"/>
        <dbReference type="ChEBI" id="CHEBI:137373"/>
        <dbReference type="EC" id="4.99.1.12"/>
    </reaction>
</comment>
<comment type="similarity">
    <text evidence="1">Belongs to the LarC family.</text>
</comment>